<name>Y134_RICCN</name>
<reference key="1">
    <citation type="journal article" date="2001" name="Science">
        <title>Mechanisms of evolution in Rickettsia conorii and R. prowazekii.</title>
        <authorList>
            <person name="Ogata H."/>
            <person name="Audic S."/>
            <person name="Renesto-Audiffren P."/>
            <person name="Fournier P.-E."/>
            <person name="Barbe V."/>
            <person name="Samson D."/>
            <person name="Roux V."/>
            <person name="Cossart P."/>
            <person name="Weissenbach J."/>
            <person name="Claverie J.-M."/>
            <person name="Raoult D."/>
        </authorList>
    </citation>
    <scope>NUCLEOTIDE SEQUENCE [LARGE SCALE GENOMIC DNA]</scope>
    <source>
        <strain>ATCC VR-613 / Malish 7</strain>
    </source>
</reference>
<dbReference type="EMBL" id="AE006914">
    <property type="protein sequence ID" value="AAL02672.1"/>
    <property type="molecule type" value="Genomic_DNA"/>
</dbReference>
<dbReference type="PIR" id="F97716">
    <property type="entry name" value="F97716"/>
</dbReference>
<dbReference type="RefSeq" id="WP_010976812.1">
    <property type="nucleotide sequence ID" value="NC_003103.1"/>
</dbReference>
<dbReference type="SMR" id="Q92JD3"/>
<dbReference type="GeneID" id="928057"/>
<dbReference type="KEGG" id="rco:RC0134"/>
<dbReference type="PATRIC" id="fig|272944.4.peg.157"/>
<dbReference type="HOGENOM" id="CLU_105070_0_0_5"/>
<dbReference type="Proteomes" id="UP000000816">
    <property type="component" value="Chromosome"/>
</dbReference>
<dbReference type="InterPro" id="IPR011324">
    <property type="entry name" value="Cytotoxic_necrot_fac-like_cat"/>
</dbReference>
<dbReference type="SUPFAM" id="SSF64438">
    <property type="entry name" value="CNF1/YfiH-like putative cysteine hydrolases"/>
    <property type="match status" value="1"/>
</dbReference>
<accession>Q92JD3</accession>
<sequence length="165" mass="18085">MARLALGAAYKTQNRKENSIAQYAYSYSLQQGIVDYEAVRVEQHKVGFSDQEKIGTDNIQQCVAVILHDPLTKKTALAHVDRFTYAGSLTHDVISNFPPNTQLEAYLVGGRDRSAVSISVSDGNIRKVTQELTNHFNVNIKSADIEDKGAPLGIIFDPITSNCSG</sequence>
<protein>
    <recommendedName>
        <fullName>Uncharacterized protein RC0134</fullName>
    </recommendedName>
</protein>
<gene>
    <name type="ordered locus">RC0134</name>
</gene>
<feature type="chain" id="PRO_0000101456" description="Uncharacterized protein RC0134">
    <location>
        <begin position="1"/>
        <end position="165"/>
    </location>
</feature>
<organism>
    <name type="scientific">Rickettsia conorii (strain ATCC VR-613 / Malish 7)</name>
    <dbReference type="NCBI Taxonomy" id="272944"/>
    <lineage>
        <taxon>Bacteria</taxon>
        <taxon>Pseudomonadati</taxon>
        <taxon>Pseudomonadota</taxon>
        <taxon>Alphaproteobacteria</taxon>
        <taxon>Rickettsiales</taxon>
        <taxon>Rickettsiaceae</taxon>
        <taxon>Rickettsieae</taxon>
        <taxon>Rickettsia</taxon>
        <taxon>spotted fever group</taxon>
    </lineage>
</organism>
<proteinExistence type="predicted"/>